<proteinExistence type="evidence at protein level"/>
<sequence>MGGLEVEKTTIGWAARDPSGVLSPYTYTLRNTGPEDVEVKVLYCGLCHTDLHQVKNDLGMSNYPLVPGHEVVGEVVEVGPDVSKFKVGDTVGVGLLVGSCRNCGPCKRDIEQYCNKKIWNCNDVYTDGKPTQGGFAKSMVVDQKFVVKIPEGMAPEQAAPLLCAGITVYSPLNHFGFKQSGLRGGILGLGGVGHMGVKIAKAMGHHVTVISSSNKKRQEALEHLGADDYLVSSDTDKMQEASDSLDYIIDTVPVGHPLEPYLSLLKIDGKLILMGVINTPLQFISPMVMLGRKSITGSFIGSMKETEEMLDFCKEKGVTSQIEIVKMDYINTAMERLEKNDVRYRFVVDVIGSKLDQ</sequence>
<comment type="function">
    <text evidence="1">Involved in lignin biosynthesis. Catalyzes the final step specific for the production of lignin monomers. Catalyzes the NADPH-dependent reduction of coniferaldehyde, 5-hydroxyconiferaldehyde, sinapaldehyde, 4-coumaraldehyde and caffeyl aldehyde to their respective alcohols.</text>
</comment>
<comment type="catalytic activity">
    <reaction evidence="1">
        <text>(E)-cinnamyl alcohol + NADP(+) = (E)-cinnamaldehyde + NADPH + H(+)</text>
        <dbReference type="Rhea" id="RHEA:10392"/>
        <dbReference type="ChEBI" id="CHEBI:15378"/>
        <dbReference type="ChEBI" id="CHEBI:16731"/>
        <dbReference type="ChEBI" id="CHEBI:33227"/>
        <dbReference type="ChEBI" id="CHEBI:57783"/>
        <dbReference type="ChEBI" id="CHEBI:58349"/>
        <dbReference type="EC" id="1.1.1.195"/>
    </reaction>
    <physiologicalReaction direction="right-to-left" evidence="1">
        <dbReference type="Rhea" id="RHEA:10394"/>
    </physiologicalReaction>
</comment>
<comment type="catalytic activity">
    <reaction evidence="1">
        <text>(E)-coniferol + NADP(+) = (E)-coniferaldehyde + NADPH + H(+)</text>
        <dbReference type="Rhea" id="RHEA:22444"/>
        <dbReference type="ChEBI" id="CHEBI:15378"/>
        <dbReference type="ChEBI" id="CHEBI:16547"/>
        <dbReference type="ChEBI" id="CHEBI:17745"/>
        <dbReference type="ChEBI" id="CHEBI:57783"/>
        <dbReference type="ChEBI" id="CHEBI:58349"/>
        <dbReference type="EC" id="1.1.1.195"/>
    </reaction>
    <physiologicalReaction direction="right-to-left" evidence="1">
        <dbReference type="Rhea" id="RHEA:22446"/>
    </physiologicalReaction>
</comment>
<comment type="catalytic activity">
    <reaction evidence="1">
        <text>(E)-sinapyl alcohol + NADP(+) = (E)-sinapaldehyde + NADPH + H(+)</text>
        <dbReference type="Rhea" id="RHEA:45704"/>
        <dbReference type="ChEBI" id="CHEBI:15378"/>
        <dbReference type="ChEBI" id="CHEBI:27949"/>
        <dbReference type="ChEBI" id="CHEBI:57783"/>
        <dbReference type="ChEBI" id="CHEBI:58349"/>
        <dbReference type="ChEBI" id="CHEBI:64557"/>
        <dbReference type="EC" id="1.1.1.195"/>
    </reaction>
    <physiologicalReaction direction="right-to-left" evidence="1">
        <dbReference type="Rhea" id="RHEA:45706"/>
    </physiologicalReaction>
</comment>
<comment type="catalytic activity">
    <reaction evidence="1">
        <text>(E)-4-coumaroyl alcohol + NADP(+) = (E)-4-coumaraldehyde + NADPH + H(+)</text>
        <dbReference type="Rhea" id="RHEA:45724"/>
        <dbReference type="ChEBI" id="CHEBI:15378"/>
        <dbReference type="ChEBI" id="CHEBI:28353"/>
        <dbReference type="ChEBI" id="CHEBI:57783"/>
        <dbReference type="ChEBI" id="CHEBI:58349"/>
        <dbReference type="ChEBI" id="CHEBI:64555"/>
        <dbReference type="EC" id="1.1.1.195"/>
    </reaction>
    <physiologicalReaction direction="right-to-left" evidence="1">
        <dbReference type="Rhea" id="RHEA:45726"/>
    </physiologicalReaction>
</comment>
<comment type="catalytic activity">
    <reaction evidence="1">
        <text>(E)-caffeyl alcohol + NADP(+) = (E)-caffeyl aldehyde + NADPH + H(+)</text>
        <dbReference type="Rhea" id="RHEA:45728"/>
        <dbReference type="ChEBI" id="CHEBI:15378"/>
        <dbReference type="ChEBI" id="CHEBI:28323"/>
        <dbReference type="ChEBI" id="CHEBI:31334"/>
        <dbReference type="ChEBI" id="CHEBI:57783"/>
        <dbReference type="ChEBI" id="CHEBI:58349"/>
    </reaction>
    <physiologicalReaction direction="right-to-left" evidence="1">
        <dbReference type="Rhea" id="RHEA:45730"/>
    </physiologicalReaction>
</comment>
<comment type="cofactor">
    <cofactor evidence="1">
        <name>Zn(2+)</name>
        <dbReference type="ChEBI" id="CHEBI:29105"/>
    </cofactor>
    <text evidence="1">Binds 2 Zn(2+) ions per subunit.</text>
</comment>
<comment type="pathway">
    <text evidence="1">Aromatic compound metabolism; phenylpropanoid biosynthesis.</text>
</comment>
<comment type="subunit">
    <text evidence="1">Homodimer.</text>
</comment>
<comment type="induction">
    <text>By fungal elicitor.</text>
</comment>
<comment type="PTM">
    <text>The N-terminus is blocked.</text>
</comment>
<comment type="similarity">
    <text evidence="3">Belongs to the zinc-containing alcohol dehydrogenase family.</text>
</comment>
<reference key="1">
    <citation type="journal article" date="1992" name="Plant Mol. Biol.">
        <title>Identification and characterisation of cDNA clones encoding cinnamyl alcohol dehydrogenase from tobacco.</title>
        <authorList>
            <person name="Knight M.E."/>
            <person name="Halpin C."/>
            <person name="Schuch W."/>
        </authorList>
    </citation>
    <scope>NUCLEOTIDE SEQUENCE [MRNA]</scope>
    <scope>PARTIAL PROTEIN SEQUENCE</scope>
    <source>
        <strain>cv. Samsun</strain>
        <tissue>Stem</tissue>
    </source>
</reference>
<keyword id="KW-0903">Direct protein sequencing</keyword>
<keyword id="KW-0438">Lignin biosynthesis</keyword>
<keyword id="KW-0479">Metal-binding</keyword>
<keyword id="KW-0521">NADP</keyword>
<keyword id="KW-0560">Oxidoreductase</keyword>
<keyword id="KW-1185">Reference proteome</keyword>
<keyword id="KW-0862">Zinc</keyword>
<protein>
    <recommendedName>
        <fullName>Probable cinnamyl alcohol dehydrogenase 1</fullName>
        <shortName evidence="2">CAD 1</shortName>
        <ecNumber evidence="1">1.1.1.195</ecNumber>
    </recommendedName>
</protein>
<accession>P30359</accession>
<evidence type="ECO:0000250" key="1">
    <source>
        <dbReference type="UniProtKB" id="O49482"/>
    </source>
</evidence>
<evidence type="ECO:0000303" key="2">
    <source>
    </source>
</evidence>
<evidence type="ECO:0000305" key="3"/>
<dbReference type="EC" id="1.1.1.195" evidence="1"/>
<dbReference type="EMBL" id="X62343">
    <property type="protein sequence ID" value="CAA44216.1"/>
    <property type="molecule type" value="mRNA"/>
</dbReference>
<dbReference type="PIR" id="S23525">
    <property type="entry name" value="S23525"/>
</dbReference>
<dbReference type="RefSeq" id="NP_001312400.1">
    <property type="nucleotide sequence ID" value="NM_001325471.1"/>
</dbReference>
<dbReference type="SMR" id="P30359"/>
<dbReference type="STRING" id="4097.P30359"/>
<dbReference type="PaxDb" id="4097-P30359"/>
<dbReference type="GeneID" id="107789450"/>
<dbReference type="KEGG" id="nta:107789450"/>
<dbReference type="OMA" id="CRGRNGD"/>
<dbReference type="OrthoDB" id="1879366at2759"/>
<dbReference type="PhylomeDB" id="P30359"/>
<dbReference type="UniPathway" id="UPA00711"/>
<dbReference type="Proteomes" id="UP000084051">
    <property type="component" value="Unplaced"/>
</dbReference>
<dbReference type="GO" id="GO:0045551">
    <property type="term" value="F:cinnamyl-alcohol dehydrogenase activity"/>
    <property type="evidence" value="ECO:0000318"/>
    <property type="project" value="GO_Central"/>
</dbReference>
<dbReference type="GO" id="GO:0050268">
    <property type="term" value="F:coniferyl-alcohol dehydrogenase activity"/>
    <property type="evidence" value="ECO:0007669"/>
    <property type="project" value="RHEA"/>
</dbReference>
<dbReference type="GO" id="GO:0008270">
    <property type="term" value="F:zinc ion binding"/>
    <property type="evidence" value="ECO:0007669"/>
    <property type="project" value="InterPro"/>
</dbReference>
<dbReference type="GO" id="GO:0009820">
    <property type="term" value="P:alkaloid metabolic process"/>
    <property type="evidence" value="ECO:0007669"/>
    <property type="project" value="UniProtKB-ARBA"/>
</dbReference>
<dbReference type="GO" id="GO:0009809">
    <property type="term" value="P:lignin biosynthetic process"/>
    <property type="evidence" value="ECO:0000318"/>
    <property type="project" value="GO_Central"/>
</dbReference>
<dbReference type="CDD" id="cd05283">
    <property type="entry name" value="CAD1"/>
    <property type="match status" value="1"/>
</dbReference>
<dbReference type="FunFam" id="3.40.50.720:FF:000022">
    <property type="entry name" value="Cinnamyl alcohol dehydrogenase"/>
    <property type="match status" value="1"/>
</dbReference>
<dbReference type="FunFam" id="3.90.180.10:FF:000004">
    <property type="entry name" value="probable cinnamyl alcohol dehydrogenase"/>
    <property type="match status" value="1"/>
</dbReference>
<dbReference type="FunFam" id="3.90.180.10:FF:000100">
    <property type="entry name" value="Putative cinnamyl alcohol dehydrogenase 6"/>
    <property type="match status" value="1"/>
</dbReference>
<dbReference type="Gene3D" id="3.90.180.10">
    <property type="entry name" value="Medium-chain alcohol dehydrogenases, catalytic domain"/>
    <property type="match status" value="1"/>
</dbReference>
<dbReference type="Gene3D" id="3.40.50.720">
    <property type="entry name" value="NAD(P)-binding Rossmann-like Domain"/>
    <property type="match status" value="1"/>
</dbReference>
<dbReference type="InterPro" id="IPR013149">
    <property type="entry name" value="ADH-like_C"/>
</dbReference>
<dbReference type="InterPro" id="IPR013154">
    <property type="entry name" value="ADH-like_N"/>
</dbReference>
<dbReference type="InterPro" id="IPR002328">
    <property type="entry name" value="ADH_Zn_CS"/>
</dbReference>
<dbReference type="InterPro" id="IPR047109">
    <property type="entry name" value="CAD-like"/>
</dbReference>
<dbReference type="InterPro" id="IPR011032">
    <property type="entry name" value="GroES-like_sf"/>
</dbReference>
<dbReference type="InterPro" id="IPR036291">
    <property type="entry name" value="NAD(P)-bd_dom_sf"/>
</dbReference>
<dbReference type="InterPro" id="IPR020843">
    <property type="entry name" value="PKS_ER"/>
</dbReference>
<dbReference type="PANTHER" id="PTHR42683">
    <property type="entry name" value="ALDEHYDE REDUCTASE"/>
    <property type="match status" value="1"/>
</dbReference>
<dbReference type="Pfam" id="PF08240">
    <property type="entry name" value="ADH_N"/>
    <property type="match status" value="1"/>
</dbReference>
<dbReference type="Pfam" id="PF00107">
    <property type="entry name" value="ADH_zinc_N"/>
    <property type="match status" value="1"/>
</dbReference>
<dbReference type="SMART" id="SM00829">
    <property type="entry name" value="PKS_ER"/>
    <property type="match status" value="1"/>
</dbReference>
<dbReference type="SUPFAM" id="SSF50129">
    <property type="entry name" value="GroES-like"/>
    <property type="match status" value="1"/>
</dbReference>
<dbReference type="SUPFAM" id="SSF51735">
    <property type="entry name" value="NAD(P)-binding Rossmann-fold domains"/>
    <property type="match status" value="1"/>
</dbReference>
<dbReference type="PROSITE" id="PS00059">
    <property type="entry name" value="ADH_ZINC"/>
    <property type="match status" value="1"/>
</dbReference>
<gene>
    <name evidence="2" type="primary">CAD14</name>
</gene>
<name>CADH1_TOBAC</name>
<organism>
    <name type="scientific">Nicotiana tabacum</name>
    <name type="common">Common tobacco</name>
    <dbReference type="NCBI Taxonomy" id="4097"/>
    <lineage>
        <taxon>Eukaryota</taxon>
        <taxon>Viridiplantae</taxon>
        <taxon>Streptophyta</taxon>
        <taxon>Embryophyta</taxon>
        <taxon>Tracheophyta</taxon>
        <taxon>Spermatophyta</taxon>
        <taxon>Magnoliopsida</taxon>
        <taxon>eudicotyledons</taxon>
        <taxon>Gunneridae</taxon>
        <taxon>Pentapetalae</taxon>
        <taxon>asterids</taxon>
        <taxon>lamiids</taxon>
        <taxon>Solanales</taxon>
        <taxon>Solanaceae</taxon>
        <taxon>Nicotianoideae</taxon>
        <taxon>Nicotianeae</taxon>
        <taxon>Nicotiana</taxon>
    </lineage>
</organism>
<feature type="chain" id="PRO_0000160805" description="Probable cinnamyl alcohol dehydrogenase 1">
    <location>
        <begin position="1"/>
        <end position="357"/>
    </location>
</feature>
<feature type="binding site" evidence="1">
    <location>
        <position position="47"/>
    </location>
    <ligand>
        <name>Zn(2+)</name>
        <dbReference type="ChEBI" id="CHEBI:29105"/>
        <label>1</label>
        <note>catalytic</note>
    </ligand>
</feature>
<feature type="binding site" evidence="1">
    <location>
        <position position="49"/>
    </location>
    <ligand>
        <name>NADP(+)</name>
        <dbReference type="ChEBI" id="CHEBI:58349"/>
    </ligand>
</feature>
<feature type="binding site" evidence="1">
    <location>
        <position position="69"/>
    </location>
    <ligand>
        <name>Zn(2+)</name>
        <dbReference type="ChEBI" id="CHEBI:29105"/>
        <label>1</label>
        <note>catalytic</note>
    </ligand>
</feature>
<feature type="binding site" evidence="1">
    <location>
        <position position="70"/>
    </location>
    <ligand>
        <name>Zn(2+)</name>
        <dbReference type="ChEBI" id="CHEBI:29105"/>
        <label>1</label>
        <note>catalytic</note>
    </ligand>
</feature>
<feature type="binding site" evidence="1">
    <location>
        <position position="100"/>
    </location>
    <ligand>
        <name>Zn(2+)</name>
        <dbReference type="ChEBI" id="CHEBI:29105"/>
        <label>2</label>
    </ligand>
</feature>
<feature type="binding site" evidence="1">
    <location>
        <position position="103"/>
    </location>
    <ligand>
        <name>Zn(2+)</name>
        <dbReference type="ChEBI" id="CHEBI:29105"/>
        <label>2</label>
    </ligand>
</feature>
<feature type="binding site" evidence="1">
    <location>
        <position position="106"/>
    </location>
    <ligand>
        <name>Zn(2+)</name>
        <dbReference type="ChEBI" id="CHEBI:29105"/>
        <label>2</label>
    </ligand>
</feature>
<feature type="binding site" evidence="1">
    <location>
        <position position="114"/>
    </location>
    <ligand>
        <name>Zn(2+)</name>
        <dbReference type="ChEBI" id="CHEBI:29105"/>
        <label>2</label>
    </ligand>
</feature>
<feature type="binding site" evidence="1">
    <location>
        <position position="163"/>
    </location>
    <ligand>
        <name>Zn(2+)</name>
        <dbReference type="ChEBI" id="CHEBI:29105"/>
        <label>1</label>
        <note>catalytic</note>
    </ligand>
</feature>
<feature type="binding site" evidence="1">
    <location>
        <position position="167"/>
    </location>
    <ligand>
        <name>NADP(+)</name>
        <dbReference type="ChEBI" id="CHEBI:58349"/>
    </ligand>
</feature>
<feature type="binding site" evidence="1">
    <location>
        <begin position="188"/>
        <end position="193"/>
    </location>
    <ligand>
        <name>NADP(+)</name>
        <dbReference type="ChEBI" id="CHEBI:58349"/>
    </ligand>
</feature>
<feature type="binding site" evidence="1">
    <location>
        <begin position="211"/>
        <end position="216"/>
    </location>
    <ligand>
        <name>NADP(+)</name>
        <dbReference type="ChEBI" id="CHEBI:58349"/>
    </ligand>
</feature>
<feature type="binding site" evidence="1">
    <location>
        <position position="251"/>
    </location>
    <ligand>
        <name>NADP(+)</name>
        <dbReference type="ChEBI" id="CHEBI:58349"/>
    </ligand>
</feature>
<feature type="binding site" evidence="1">
    <location>
        <position position="275"/>
    </location>
    <ligand>
        <name>NADP(+)</name>
        <dbReference type="ChEBI" id="CHEBI:58349"/>
    </ligand>
</feature>
<feature type="binding site" evidence="1">
    <location>
        <begin position="298"/>
        <end position="300"/>
    </location>
    <ligand>
        <name>NADP(+)</name>
        <dbReference type="ChEBI" id="CHEBI:58349"/>
    </ligand>
</feature>